<dbReference type="EMBL" id="AK057298">
    <property type="protein sequence ID" value="BAB71415.1"/>
    <property type="molecule type" value="mRNA"/>
</dbReference>
<dbReference type="EMBL" id="BC015415">
    <property type="protein sequence ID" value="AAH15415.1"/>
    <property type="molecule type" value="mRNA"/>
</dbReference>
<dbReference type="EMBL" id="BC109058">
    <property type="protein sequence ID" value="AAI09059.1"/>
    <property type="molecule type" value="mRNA"/>
</dbReference>
<dbReference type="EMBL" id="BC109059">
    <property type="protein sequence ID" value="AAI09060.1"/>
    <property type="molecule type" value="mRNA"/>
</dbReference>
<dbReference type="EMBL" id="AB051464">
    <property type="protein sequence ID" value="BAB21768.1"/>
    <property type="molecule type" value="mRNA"/>
</dbReference>
<dbReference type="EMBL" id="AL834313">
    <property type="protein sequence ID" value="CAD38983.1"/>
    <property type="molecule type" value="mRNA"/>
</dbReference>
<dbReference type="CCDS" id="CCDS35217.1"/>
<dbReference type="RefSeq" id="NP_085127.2">
    <property type="nucleotide sequence ID" value="NM_030624.3"/>
</dbReference>
<dbReference type="RefSeq" id="XP_006724581.1">
    <property type="nucleotide sequence ID" value="XM_006724518.1"/>
</dbReference>
<dbReference type="SMR" id="Q96M94"/>
<dbReference type="BioGRID" id="123224">
    <property type="interactions" value="93"/>
</dbReference>
<dbReference type="ComplexPortal" id="CPX-8097">
    <property type="entry name" value="CRL3 E3 ubiquitin ligase complex, KLHL15 variant"/>
</dbReference>
<dbReference type="FunCoup" id="Q96M94">
    <property type="interactions" value="753"/>
</dbReference>
<dbReference type="IntAct" id="Q96M94">
    <property type="interactions" value="71"/>
</dbReference>
<dbReference type="MINT" id="Q96M94"/>
<dbReference type="STRING" id="9606.ENSP00000332791"/>
<dbReference type="GlyGen" id="Q96M94">
    <property type="glycosylation" value="1 site, 1 O-linked glycan (1 site)"/>
</dbReference>
<dbReference type="iPTMnet" id="Q96M94"/>
<dbReference type="PhosphoSitePlus" id="Q96M94"/>
<dbReference type="BioMuta" id="KLHL15"/>
<dbReference type="DMDM" id="88909167"/>
<dbReference type="jPOST" id="Q96M94"/>
<dbReference type="MassIVE" id="Q96M94"/>
<dbReference type="PaxDb" id="9606-ENSP00000332791"/>
<dbReference type="PeptideAtlas" id="Q96M94"/>
<dbReference type="ProteomicsDB" id="77318"/>
<dbReference type="Pumba" id="Q96M94"/>
<dbReference type="Antibodypedia" id="24558">
    <property type="antibodies" value="92 antibodies from 28 providers"/>
</dbReference>
<dbReference type="DNASU" id="80311"/>
<dbReference type="Ensembl" id="ENST00000328046.8">
    <property type="protein sequence ID" value="ENSP00000332791.8"/>
    <property type="gene ID" value="ENSG00000174010.10"/>
</dbReference>
<dbReference type="Ensembl" id="ENST00000684871.1">
    <property type="protein sequence ID" value="ENSP00000509774.1"/>
    <property type="gene ID" value="ENSG00000174010.10"/>
</dbReference>
<dbReference type="Ensembl" id="ENST00000685367.1">
    <property type="protein sequence ID" value="ENSP00000509439.1"/>
    <property type="gene ID" value="ENSG00000174010.10"/>
</dbReference>
<dbReference type="Ensembl" id="ENST00000689334.1">
    <property type="protein sequence ID" value="ENSP00000508713.1"/>
    <property type="gene ID" value="ENSG00000174010.10"/>
</dbReference>
<dbReference type="Ensembl" id="ENST00000693269.1">
    <property type="protein sequence ID" value="ENSP00000509509.1"/>
    <property type="gene ID" value="ENSG00000174010.10"/>
</dbReference>
<dbReference type="GeneID" id="80311"/>
<dbReference type="KEGG" id="hsa:80311"/>
<dbReference type="MANE-Select" id="ENST00000328046.8">
    <property type="protein sequence ID" value="ENSP00000332791.8"/>
    <property type="RefSeq nucleotide sequence ID" value="NM_030624.3"/>
    <property type="RefSeq protein sequence ID" value="NP_085127.2"/>
</dbReference>
<dbReference type="AGR" id="HGNC:29347"/>
<dbReference type="CTD" id="80311"/>
<dbReference type="DisGeNET" id="80311"/>
<dbReference type="GeneCards" id="KLHL15"/>
<dbReference type="HGNC" id="HGNC:29347">
    <property type="gene designation" value="KLHL15"/>
</dbReference>
<dbReference type="HPA" id="ENSG00000174010">
    <property type="expression patterns" value="Tissue enhanced (bone)"/>
</dbReference>
<dbReference type="MalaCards" id="KLHL15"/>
<dbReference type="MIM" id="300980">
    <property type="type" value="gene"/>
</dbReference>
<dbReference type="MIM" id="300982">
    <property type="type" value="phenotype"/>
</dbReference>
<dbReference type="neXtProt" id="NX_Q96M94"/>
<dbReference type="OpenTargets" id="ENSG00000174010"/>
<dbReference type="PharmGKB" id="PA134934728"/>
<dbReference type="VEuPathDB" id="HostDB:ENSG00000174010"/>
<dbReference type="eggNOG" id="KOG4441">
    <property type="taxonomic scope" value="Eukaryota"/>
</dbReference>
<dbReference type="GeneTree" id="ENSGT00940000159116"/>
<dbReference type="HOGENOM" id="CLU_004253_16_1_1"/>
<dbReference type="InParanoid" id="Q96M94"/>
<dbReference type="OMA" id="PRHNSWL"/>
<dbReference type="OrthoDB" id="45365at2759"/>
<dbReference type="PAN-GO" id="Q96M94">
    <property type="GO annotations" value="2 GO annotations based on evolutionary models"/>
</dbReference>
<dbReference type="PhylomeDB" id="Q96M94"/>
<dbReference type="TreeFam" id="TF328485"/>
<dbReference type="PathwayCommons" id="Q96M94"/>
<dbReference type="SignaLink" id="Q96M94"/>
<dbReference type="SIGNOR" id="Q96M94"/>
<dbReference type="UniPathway" id="UPA00143"/>
<dbReference type="BioGRID-ORCS" id="80311">
    <property type="hits" value="10 hits in 818 CRISPR screens"/>
</dbReference>
<dbReference type="ChiTaRS" id="KLHL15">
    <property type="organism name" value="human"/>
</dbReference>
<dbReference type="GenomeRNAi" id="80311"/>
<dbReference type="Pharos" id="Q96M94">
    <property type="development level" value="Tbio"/>
</dbReference>
<dbReference type="PRO" id="PR:Q96M94"/>
<dbReference type="Proteomes" id="UP000005640">
    <property type="component" value="Chromosome X"/>
</dbReference>
<dbReference type="RNAct" id="Q96M94">
    <property type="molecule type" value="protein"/>
</dbReference>
<dbReference type="Bgee" id="ENSG00000174010">
    <property type="expression patterns" value="Expressed in adrenal tissue and 174 other cell types or tissues"/>
</dbReference>
<dbReference type="ExpressionAtlas" id="Q96M94">
    <property type="expression patterns" value="baseline and differential"/>
</dbReference>
<dbReference type="GO" id="GO:0031463">
    <property type="term" value="C:Cul3-RING ubiquitin ligase complex"/>
    <property type="evidence" value="ECO:0007669"/>
    <property type="project" value="InterPro"/>
</dbReference>
<dbReference type="GO" id="GO:0005634">
    <property type="term" value="C:nucleus"/>
    <property type="evidence" value="ECO:0000314"/>
    <property type="project" value="UniProtKB"/>
</dbReference>
<dbReference type="GO" id="GO:1990756">
    <property type="term" value="F:ubiquitin-like ligase-substrate adaptor activity"/>
    <property type="evidence" value="ECO:0000314"/>
    <property type="project" value="UniProtKB"/>
</dbReference>
<dbReference type="GO" id="GO:2000042">
    <property type="term" value="P:negative regulation of double-strand break repair via homologous recombination"/>
    <property type="evidence" value="ECO:0000314"/>
    <property type="project" value="UniProtKB"/>
</dbReference>
<dbReference type="GO" id="GO:0071630">
    <property type="term" value="P:nuclear protein quality control by the ubiquitin-proteasome system"/>
    <property type="evidence" value="ECO:0000314"/>
    <property type="project" value="UniProtKB"/>
</dbReference>
<dbReference type="GO" id="GO:0016567">
    <property type="term" value="P:protein ubiquitination"/>
    <property type="evidence" value="ECO:0007669"/>
    <property type="project" value="UniProtKB-UniPathway"/>
</dbReference>
<dbReference type="GO" id="GO:0006511">
    <property type="term" value="P:ubiquitin-dependent protein catabolic process"/>
    <property type="evidence" value="ECO:0000314"/>
    <property type="project" value="UniProtKB"/>
</dbReference>
<dbReference type="CDD" id="cd18454">
    <property type="entry name" value="BACK_KLHL15"/>
    <property type="match status" value="1"/>
</dbReference>
<dbReference type="CDD" id="cd18244">
    <property type="entry name" value="BTB_POZ_KLHL15"/>
    <property type="match status" value="1"/>
</dbReference>
<dbReference type="FunFam" id="3.30.710.10:FF:000087">
    <property type="entry name" value="Kelch-like family member 15"/>
    <property type="match status" value="1"/>
</dbReference>
<dbReference type="FunFam" id="1.25.40.420:FF:000009">
    <property type="entry name" value="Kelch-like protein 15"/>
    <property type="match status" value="1"/>
</dbReference>
<dbReference type="FunFam" id="2.120.10.80:FF:000014">
    <property type="entry name" value="Kelch-like protein 15"/>
    <property type="match status" value="1"/>
</dbReference>
<dbReference type="Gene3D" id="1.25.40.420">
    <property type="match status" value="1"/>
</dbReference>
<dbReference type="Gene3D" id="2.120.10.80">
    <property type="entry name" value="Kelch-type beta propeller"/>
    <property type="match status" value="1"/>
</dbReference>
<dbReference type="Gene3D" id="3.30.710.10">
    <property type="entry name" value="Potassium Channel Kv1.1, Chain A"/>
    <property type="match status" value="1"/>
</dbReference>
<dbReference type="InterPro" id="IPR011705">
    <property type="entry name" value="BACK"/>
</dbReference>
<dbReference type="InterPro" id="IPR017096">
    <property type="entry name" value="BTB-kelch_protein"/>
</dbReference>
<dbReference type="InterPro" id="IPR000210">
    <property type="entry name" value="BTB/POZ_dom"/>
</dbReference>
<dbReference type="InterPro" id="IPR030597">
    <property type="entry name" value="BTB_POZ_KLHL15"/>
</dbReference>
<dbReference type="InterPro" id="IPR015915">
    <property type="entry name" value="Kelch-typ_b-propeller"/>
</dbReference>
<dbReference type="InterPro" id="IPR006652">
    <property type="entry name" value="Kelch_1"/>
</dbReference>
<dbReference type="InterPro" id="IPR047030">
    <property type="entry name" value="KLHL15_BACK"/>
</dbReference>
<dbReference type="InterPro" id="IPR011333">
    <property type="entry name" value="SKP1/BTB/POZ_sf"/>
</dbReference>
<dbReference type="PANTHER" id="PTHR45632:SF12">
    <property type="entry name" value="KELCH-LIKE PROTEIN 15"/>
    <property type="match status" value="1"/>
</dbReference>
<dbReference type="PANTHER" id="PTHR45632">
    <property type="entry name" value="LD33804P"/>
    <property type="match status" value="1"/>
</dbReference>
<dbReference type="Pfam" id="PF07707">
    <property type="entry name" value="BACK"/>
    <property type="match status" value="1"/>
</dbReference>
<dbReference type="Pfam" id="PF00651">
    <property type="entry name" value="BTB"/>
    <property type="match status" value="1"/>
</dbReference>
<dbReference type="Pfam" id="PF01344">
    <property type="entry name" value="Kelch_1"/>
    <property type="match status" value="2"/>
</dbReference>
<dbReference type="Pfam" id="PF13964">
    <property type="entry name" value="Kelch_6"/>
    <property type="match status" value="1"/>
</dbReference>
<dbReference type="PIRSF" id="PIRSF037037">
    <property type="entry name" value="Kelch-like_protein_gigaxonin"/>
    <property type="match status" value="1"/>
</dbReference>
<dbReference type="SMART" id="SM00875">
    <property type="entry name" value="BACK"/>
    <property type="match status" value="1"/>
</dbReference>
<dbReference type="SMART" id="SM00225">
    <property type="entry name" value="BTB"/>
    <property type="match status" value="1"/>
</dbReference>
<dbReference type="SMART" id="SM00612">
    <property type="entry name" value="Kelch"/>
    <property type="match status" value="5"/>
</dbReference>
<dbReference type="SUPFAM" id="SSF117281">
    <property type="entry name" value="Kelch motif"/>
    <property type="match status" value="1"/>
</dbReference>
<dbReference type="SUPFAM" id="SSF54695">
    <property type="entry name" value="POZ domain"/>
    <property type="match status" value="1"/>
</dbReference>
<dbReference type="PROSITE" id="PS50097">
    <property type="entry name" value="BTB"/>
    <property type="match status" value="1"/>
</dbReference>
<keyword id="KW-0903">Direct protein sequencing</keyword>
<keyword id="KW-0991">Intellectual disability</keyword>
<keyword id="KW-0880">Kelch repeat</keyword>
<keyword id="KW-0539">Nucleus</keyword>
<keyword id="KW-1267">Proteomics identification</keyword>
<keyword id="KW-1185">Reference proteome</keyword>
<keyword id="KW-0677">Repeat</keyword>
<keyword id="KW-0833">Ubl conjugation pathway</keyword>
<sequence length="604" mass="69775">MAGDVEGFCSSIHDTSVSAGFRALYEEGLLLDVTLVIEDHQFQAHKALLATQSDYFRIMFTADMRERDQDKIHLKGLTATGFSHVLQFMYYGTIELSMNTVHEILQAAMYVQLIEVVKFCCSFLLAKICLENCAEIMRLLDDFGVNIEGVREKLDTFLLDNFVPLMSRPDFLSYLSFEKLMSYLDNDHLSRFPEIELYEAVQSWLRHDRRRWRHTDTIIQNIRFCLMTPTSVFEKVKTSEFYRYSRQLRYEVDQALNYFQNVHQQPLLDMKSSRIRSAKPQTTVFRGMIGHSMVNSKILLLKKPRVWWELEGPQVPLRPDCLAIVNNFVFLLGGEELGPDGEFHASSKVFRYDPRQNSWLQMADMSVPRSEFAVGVIGKFIYAVAGRTRDETFYSTERYDITNDKWEFVDPYPVNKYGHEGTVLNNKLFITGGITSSSTSKQVCVFDPSKEGTIEQRTRRTQVVTNCWENKSKMNYARCFHKMISYNGKLYVFGGVCVILRASFESQGCPSTEVYNPETDQWTILASMPIGRSGHGVTVLDKQIMVLGGLCYNGHYSDSILTFDPDENKWKEDEYPRMPCKLDGLQVCNLHFPDYVLDEVRRCN</sequence>
<proteinExistence type="evidence at protein level"/>
<name>KLH15_HUMAN</name>
<feature type="chain" id="PRO_0000223949" description="Kelch-like protein 15">
    <location>
        <begin position="1"/>
        <end position="604"/>
    </location>
</feature>
<feature type="domain" description="BTB" evidence="1">
    <location>
        <begin position="31"/>
        <end position="98"/>
    </location>
</feature>
<feature type="domain" description="BACK">
    <location>
        <begin position="133"/>
        <end position="237"/>
    </location>
</feature>
<feature type="repeat" description="Kelch 1">
    <location>
        <begin position="328"/>
        <end position="379"/>
    </location>
</feature>
<feature type="repeat" description="Kelch 2">
    <location>
        <begin position="381"/>
        <end position="426"/>
    </location>
</feature>
<feature type="repeat" description="Kelch 3">
    <location>
        <begin position="428"/>
        <end position="473"/>
    </location>
</feature>
<feature type="repeat" description="Kelch 4">
    <location>
        <begin position="489"/>
        <end position="542"/>
    </location>
</feature>
<feature type="repeat" description="Kelch 5">
    <location>
        <begin position="544"/>
        <end position="590"/>
    </location>
</feature>
<feature type="mutagenesis site" description="Impaired homodimerization and PPP2R5B proteasomal degradation. No effect on PPP2R5B-binding." evidence="3">
    <original>D</original>
    <variation>A</variation>
    <location>
        <position position="32"/>
    </location>
</feature>
<feature type="mutagenesis site" description="No effect on homodimerization, PPP2R5B-binding, nor on PPP2R5B proteasomal degradation." evidence="3">
    <original>H</original>
    <variation>L</variation>
    <location>
        <position position="45"/>
    </location>
</feature>
<feature type="mutagenesis site" description="No effect on PPP2R5B-binding, nor on homodimerization, but loss of CUL3 recruitment to the KLHL15/PPP2R5B complex and impaired PPP2R5B proteasomal degradation." evidence="3">
    <original>IHLK</original>
    <variation>AHAA</variation>
    <location>
        <begin position="72"/>
        <end position="75"/>
    </location>
</feature>
<feature type="mutagenesis site" description="Decreased interaction with CUL3, especially with the neddylated form of CUL3." evidence="6">
    <original>N</original>
    <variation>A</variation>
    <location>
        <position position="132"/>
    </location>
</feature>
<feature type="mutagenesis site" description="Decreased interaction with CUL3, especially with the neddylated form of CUL3." evidence="6">
    <original>I</original>
    <variation>A</variation>
    <location>
        <position position="136"/>
    </location>
</feature>
<feature type="mutagenesis site" description="Impaired PPP2R5B-binding and proteasomal degradation." evidence="3">
    <original>R</original>
    <variation>E</variation>
    <location>
        <position position="318"/>
    </location>
</feature>
<feature type="mutagenesis site" description="Impaired PPP2R5B-binding and proteasomal degradation." evidence="3">
    <original>EEL</original>
    <variation>REA</variation>
    <location>
        <begin position="335"/>
        <end position="337"/>
    </location>
</feature>
<feature type="mutagenesis site" description="Impaired PPP2R5B-binding and proteasomal degradation." evidence="3">
    <original>E</original>
    <variation>R</variation>
    <location>
        <position position="371"/>
    </location>
</feature>
<feature type="mutagenesis site" description="Decreased interaction with RBBP8 and complete loss of nuclear localization, found exclusively in the cytoplasm." evidence="6">
    <original>G</original>
    <variation>C</variation>
    <location>
        <position position="386"/>
    </location>
</feature>
<feature type="mutagenesis site" description="Decreased interaction with RBBP8 and increased DNA-end resection and homologous recombination frequency following DNA double-strand breaks compared to the wild-type protein. No significant change in subcellular location." evidence="6">
    <original>Y</original>
    <variation>A</variation>
    <location>
        <position position="552"/>
    </location>
</feature>
<feature type="sequence conflict" description="In Ref. 1; BAB71415." evidence="8" ref="1">
    <original>K</original>
    <variation>E</variation>
    <location>
        <position position="297"/>
    </location>
</feature>
<evidence type="ECO:0000255" key="1">
    <source>
        <dbReference type="PROSITE-ProRule" id="PRU00037"/>
    </source>
</evidence>
<evidence type="ECO:0000269" key="2">
    <source>
    </source>
</evidence>
<evidence type="ECO:0000269" key="3">
    <source>
    </source>
</evidence>
<evidence type="ECO:0000269" key="4">
    <source>
    </source>
</evidence>
<evidence type="ECO:0000269" key="5">
    <source>
    </source>
</evidence>
<evidence type="ECO:0000269" key="6">
    <source>
    </source>
</evidence>
<evidence type="ECO:0000269" key="7">
    <source>
    </source>
</evidence>
<evidence type="ECO:0000305" key="8"/>
<gene>
    <name type="primary">KLHL15</name>
    <name type="synonym">KIAA1677</name>
</gene>
<protein>
    <recommendedName>
        <fullName>Kelch-like protein 15</fullName>
    </recommendedName>
</protein>
<comment type="function">
    <text evidence="2 3 6 7">Substrate-specific adapter for CUL3 E3 ubiquitin-protein ligase complex (PubMed:14528312, PubMed:27561354, PubMed:35219381). Acts as an adapter for CUL3 to target the serine/threonine-protein phosphatase 2A (PP2A) subunit PPP2R5B for ubiquitination and subsequent proteasomal degradation, thus promoting exchange with other regulatory subunits (PubMed:23135275). Acts as an adapter for CUL3 to target the DNA-end resection factor RBBP8/CtIP for ubiquitination and subsequent proteasomal degradation (PubMed:27561354, PubMed:35219381). Through the regulation of RBBP8/CtIP protein turnover, plays a key role in DNA damage response, favoring DNA double-strand repair through error-prone non-homologous end joining (NHEJ) over error-free, RBBP8-mediated homologous recombination (HR) (PubMed:27561354, PubMed:35219381).</text>
</comment>
<comment type="pathway">
    <text evidence="2 6 7">Protein modification; protein ubiquitination.</text>
</comment>
<comment type="subunit">
    <text evidence="2 3 6 7">Homodimer. Dimerization does not affect PPP2R5B-binding, but is required for its proteasomal degradation (PubMed:23135275). Interacts with CUL3 (PubMed:14528312, PubMed:23135275, PubMed:27561354). Directly interacts with PPP2R5B; this interaction leads to PPP2R5B proteasomal degradation (PubMed:23135275). Interacts with RBBP8/CtIP; this interaction leads to RBBP8 proteasomal degradation (PubMed:27561354). Interacts with PACMP micropeptide; interaction prevents ubiquitination and degradation of RBBP8/CtIP (PubMed:35219381).</text>
</comment>
<comment type="interaction">
    <interactant intactId="EBI-2510129">
        <id>Q96M94</id>
    </interactant>
    <interactant intactId="EBI-2684263">
        <id>O15075</id>
        <label>DCLK1</label>
    </interactant>
    <organismsDiffer>false</organismsDiffer>
    <experiments>2</experiments>
</comment>
<comment type="interaction">
    <interactant intactId="EBI-2510129">
        <id>Q96M94</id>
    </interactant>
    <interactant intactId="EBI-2930406">
        <id>Q8N568</id>
        <label>DCLK2</label>
    </interactant>
    <organismsDiffer>false</organismsDiffer>
    <experiments>3</experiments>
</comment>
<comment type="interaction">
    <interactant intactId="EBI-2510129">
        <id>Q96M94</id>
    </interactant>
    <interactant intactId="EBI-2687222">
        <id>Q9UPQ0</id>
        <label>LIMCH1</label>
    </interactant>
    <organismsDiffer>false</organismsDiffer>
    <experiments>2</experiments>
</comment>
<comment type="interaction">
    <interactant intactId="EBI-2510129">
        <id>Q96M94</id>
    </interactant>
    <interactant intactId="EBI-744342">
        <id>Q8IVD9</id>
        <label>NUDCD3</label>
    </interactant>
    <organismsDiffer>false</organismsDiffer>
    <experiments>3</experiments>
</comment>
<comment type="interaction">
    <interactant intactId="EBI-2510129">
        <id>Q96M94</id>
    </interactant>
    <interactant intactId="EBI-16724620">
        <id>O88809</id>
        <label>Dcx</label>
    </interactant>
    <organismsDiffer>true</organismsDiffer>
    <experiments>2</experiments>
</comment>
<comment type="subcellular location">
    <subcellularLocation>
        <location evidence="6">Nucleus</location>
    </subcellularLocation>
</comment>
<comment type="disease" evidence="4 5">
    <disease id="DI-04814">
        <name>Intellectual developmental disorder, X-linked 103</name>
        <acronym>XLID103</acronym>
        <description>A form of intellectual disability, a disorder characterized by significantly below average general intellectual functioning associated with impairments in adaptive behavior and manifested during the developmental period. Intellectual deficiency is the only primary symptom of non-syndromic X-linked forms, while syndromic forms present with associated physical, neurological and/or psychiatric manifestations.</description>
        <dbReference type="MIM" id="300982"/>
    </disease>
    <text>The disease may be caused by variants affecting the gene represented in this entry.</text>
</comment>
<accession>Q96M94</accession>
<accession>Q32MN3</accession>
<accession>Q8NDA3</accession>
<accession>Q96BM6</accession>
<accession>Q9C0I6</accession>
<reference key="1">
    <citation type="journal article" date="2004" name="Nat. Genet.">
        <title>Complete sequencing and characterization of 21,243 full-length human cDNAs.</title>
        <authorList>
            <person name="Ota T."/>
            <person name="Suzuki Y."/>
            <person name="Nishikawa T."/>
            <person name="Otsuki T."/>
            <person name="Sugiyama T."/>
            <person name="Irie R."/>
            <person name="Wakamatsu A."/>
            <person name="Hayashi K."/>
            <person name="Sato H."/>
            <person name="Nagai K."/>
            <person name="Kimura K."/>
            <person name="Makita H."/>
            <person name="Sekine M."/>
            <person name="Obayashi M."/>
            <person name="Nishi T."/>
            <person name="Shibahara T."/>
            <person name="Tanaka T."/>
            <person name="Ishii S."/>
            <person name="Yamamoto J."/>
            <person name="Saito K."/>
            <person name="Kawai Y."/>
            <person name="Isono Y."/>
            <person name="Nakamura Y."/>
            <person name="Nagahari K."/>
            <person name="Murakami K."/>
            <person name="Yasuda T."/>
            <person name="Iwayanagi T."/>
            <person name="Wagatsuma M."/>
            <person name="Shiratori A."/>
            <person name="Sudo H."/>
            <person name="Hosoiri T."/>
            <person name="Kaku Y."/>
            <person name="Kodaira H."/>
            <person name="Kondo H."/>
            <person name="Sugawara M."/>
            <person name="Takahashi M."/>
            <person name="Kanda K."/>
            <person name="Yokoi T."/>
            <person name="Furuya T."/>
            <person name="Kikkawa E."/>
            <person name="Omura Y."/>
            <person name="Abe K."/>
            <person name="Kamihara K."/>
            <person name="Katsuta N."/>
            <person name="Sato K."/>
            <person name="Tanikawa M."/>
            <person name="Yamazaki M."/>
            <person name="Ninomiya K."/>
            <person name="Ishibashi T."/>
            <person name="Yamashita H."/>
            <person name="Murakawa K."/>
            <person name="Fujimori K."/>
            <person name="Tanai H."/>
            <person name="Kimata M."/>
            <person name="Watanabe M."/>
            <person name="Hiraoka S."/>
            <person name="Chiba Y."/>
            <person name="Ishida S."/>
            <person name="Ono Y."/>
            <person name="Takiguchi S."/>
            <person name="Watanabe S."/>
            <person name="Yosida M."/>
            <person name="Hotuta T."/>
            <person name="Kusano J."/>
            <person name="Kanehori K."/>
            <person name="Takahashi-Fujii A."/>
            <person name="Hara H."/>
            <person name="Tanase T.-O."/>
            <person name="Nomura Y."/>
            <person name="Togiya S."/>
            <person name="Komai F."/>
            <person name="Hara R."/>
            <person name="Takeuchi K."/>
            <person name="Arita M."/>
            <person name="Imose N."/>
            <person name="Musashino K."/>
            <person name="Yuuki H."/>
            <person name="Oshima A."/>
            <person name="Sasaki N."/>
            <person name="Aotsuka S."/>
            <person name="Yoshikawa Y."/>
            <person name="Matsunawa H."/>
            <person name="Ichihara T."/>
            <person name="Shiohata N."/>
            <person name="Sano S."/>
            <person name="Moriya S."/>
            <person name="Momiyama H."/>
            <person name="Satoh N."/>
            <person name="Takami S."/>
            <person name="Terashima Y."/>
            <person name="Suzuki O."/>
            <person name="Nakagawa S."/>
            <person name="Senoh A."/>
            <person name="Mizoguchi H."/>
            <person name="Goto Y."/>
            <person name="Shimizu F."/>
            <person name="Wakebe H."/>
            <person name="Hishigaki H."/>
            <person name="Watanabe T."/>
            <person name="Sugiyama A."/>
            <person name="Takemoto M."/>
            <person name="Kawakami B."/>
            <person name="Yamazaki M."/>
            <person name="Watanabe K."/>
            <person name="Kumagai A."/>
            <person name="Itakura S."/>
            <person name="Fukuzumi Y."/>
            <person name="Fujimori Y."/>
            <person name="Komiyama M."/>
            <person name="Tashiro H."/>
            <person name="Tanigami A."/>
            <person name="Fujiwara T."/>
            <person name="Ono T."/>
            <person name="Yamada K."/>
            <person name="Fujii Y."/>
            <person name="Ozaki K."/>
            <person name="Hirao M."/>
            <person name="Ohmori Y."/>
            <person name="Kawabata A."/>
            <person name="Hikiji T."/>
            <person name="Kobatake N."/>
            <person name="Inagaki H."/>
            <person name="Ikema Y."/>
            <person name="Okamoto S."/>
            <person name="Okitani R."/>
            <person name="Kawakami T."/>
            <person name="Noguchi S."/>
            <person name="Itoh T."/>
            <person name="Shigeta K."/>
            <person name="Senba T."/>
            <person name="Matsumura K."/>
            <person name="Nakajima Y."/>
            <person name="Mizuno T."/>
            <person name="Morinaga M."/>
            <person name="Sasaki M."/>
            <person name="Togashi T."/>
            <person name="Oyama M."/>
            <person name="Hata H."/>
            <person name="Watanabe M."/>
            <person name="Komatsu T."/>
            <person name="Mizushima-Sugano J."/>
            <person name="Satoh T."/>
            <person name="Shirai Y."/>
            <person name="Takahashi Y."/>
            <person name="Nakagawa K."/>
            <person name="Okumura K."/>
            <person name="Nagase T."/>
            <person name="Nomura N."/>
            <person name="Kikuchi H."/>
            <person name="Masuho Y."/>
            <person name="Yamashita R."/>
            <person name="Nakai K."/>
            <person name="Yada T."/>
            <person name="Nakamura Y."/>
            <person name="Ohara O."/>
            <person name="Isogai T."/>
            <person name="Sugano S."/>
        </authorList>
    </citation>
    <scope>NUCLEOTIDE SEQUENCE [LARGE SCALE MRNA]</scope>
    <source>
        <tissue>Testis</tissue>
    </source>
</reference>
<reference key="2">
    <citation type="journal article" date="2004" name="Genome Res.">
        <title>The status, quality, and expansion of the NIH full-length cDNA project: the Mammalian Gene Collection (MGC).</title>
        <authorList>
            <consortium name="The MGC Project Team"/>
        </authorList>
    </citation>
    <scope>NUCLEOTIDE SEQUENCE [LARGE SCALE MRNA]</scope>
    <source>
        <tissue>Duodenum</tissue>
    </source>
</reference>
<reference key="3">
    <citation type="journal article" date="2016" name="Nat. Commun.">
        <title>Cullin3-KLHL15 ubiquitin ligase mediates CtIP protein turnover to fine-tune DNA-end resection.</title>
        <authorList>
            <person name="Ferretti L.P."/>
            <person name="Himmels S.F."/>
            <person name="Trenner A."/>
            <person name="Walker C."/>
            <person name="von Aesch C."/>
            <person name="Eggenschwiler A."/>
            <person name="Murina O."/>
            <person name="Enchev R.I."/>
            <person name="Peter M."/>
            <person name="Freire R."/>
            <person name="Porro A."/>
            <person name="Sartori A.A."/>
        </authorList>
    </citation>
    <scope>PROTEIN SEQUENCE OF 2-22; 47-75; 139-151; 214-235; 250-271; 277-297; 356-450; 460-471; 533-542; 572-577 AND 582-602</scope>
    <scope>FUNCTION</scope>
    <scope>PATHWAY</scope>
    <scope>INTERACTION WITH CUL3 AND RBBP8</scope>
    <scope>SUBCELLULAR LOCATION</scope>
    <scope>CLEAVAGE OF INITIATOR METHIONINE</scope>
    <scope>MASS SPECTROMETRY</scope>
    <scope>MUTAGENESIS OF ASN-132 AND ILE-136</scope>
</reference>
<reference key="4">
    <citation type="journal article" date="2000" name="DNA Res.">
        <title>Prediction of the coding sequences of unidentified human genes. XIX. The complete sequences of 100 new cDNA clones from brain which code for large proteins in vitro.</title>
        <authorList>
            <person name="Nagase T."/>
            <person name="Kikuno R."/>
            <person name="Hattori A."/>
            <person name="Kondo Y."/>
            <person name="Okumura K."/>
            <person name="Ohara O."/>
        </authorList>
    </citation>
    <scope>NUCLEOTIDE SEQUENCE [LARGE SCALE MRNA] OF 84-604</scope>
    <source>
        <tissue>Brain</tissue>
    </source>
</reference>
<reference key="5">
    <citation type="journal article" date="2007" name="BMC Genomics">
        <title>The full-ORF clone resource of the German cDNA consortium.</title>
        <authorList>
            <person name="Bechtel S."/>
            <person name="Rosenfelder H."/>
            <person name="Duda A."/>
            <person name="Schmidt C.P."/>
            <person name="Ernst U."/>
            <person name="Wellenreuther R."/>
            <person name="Mehrle A."/>
            <person name="Schuster C."/>
            <person name="Bahr A."/>
            <person name="Bloecker H."/>
            <person name="Heubner D."/>
            <person name="Hoerlein A."/>
            <person name="Michel G."/>
            <person name="Wedler H."/>
            <person name="Koehrer K."/>
            <person name="Ottenwaelder B."/>
            <person name="Poustka A."/>
            <person name="Wiemann S."/>
            <person name="Schupp I."/>
        </authorList>
    </citation>
    <scope>NUCLEOTIDE SEQUENCE [LARGE SCALE MRNA] OF 421-604</scope>
    <source>
        <tissue>Testis</tissue>
    </source>
</reference>
<reference key="6">
    <citation type="journal article" date="2003" name="Nat. Cell Biol.">
        <title>Targeting of protein ubiquitination by BTB-Cullin 3-Roc1 ubiquitin ligases.</title>
        <authorList>
            <person name="Furukawa M."/>
            <person name="He Y.J."/>
            <person name="Borchers C."/>
            <person name="Xiong Y."/>
        </authorList>
    </citation>
    <scope>FUNCTION AS AN E3 UBIQUITIN-PROTEIN LIGASE</scope>
    <scope>PATHWAY</scope>
    <scope>INTERACTION WITH CUL3</scope>
</reference>
<reference key="7">
    <citation type="journal article" date="2012" name="J. Biol. Chem.">
        <title>Selective proteasomal degradation of the B'beta subunit of protein phosphatase 2A by the E3 ubiquitin ligase adaptor Kelch-like 15.</title>
        <authorList>
            <person name="Oberg E.A."/>
            <person name="Nifoussi S.K."/>
            <person name="Gingras A.C."/>
            <person name="Strack S."/>
        </authorList>
    </citation>
    <scope>FUNCTION</scope>
    <scope>INTERACTION WITH CUL3 AND PPP2R5B</scope>
    <scope>HOMODIMERIZATION</scope>
    <scope>MUTAGENESIS OF ASP-32; HIS-45; 72-ILE--LYS-75; ARG-318; 335-GLU--LEU-337 AND GLU-371</scope>
</reference>
<reference key="8">
    <citation type="journal article" date="2022" name="Mol. Cell">
        <title>Micropeptide PACMP inhibition elicits synthetic lethal effects by decreasing CtIP and poly(ADP-ribosyl)ation.</title>
        <authorList>
            <person name="Zhang C."/>
            <person name="Zhou B."/>
            <person name="Gu F."/>
            <person name="Liu H."/>
            <person name="Wu H."/>
            <person name="Yao F."/>
            <person name="Zheng H."/>
            <person name="Fu H."/>
            <person name="Chong W."/>
            <person name="Cai S."/>
            <person name="Huang M."/>
            <person name="Ma X."/>
            <person name="Guo Z."/>
            <person name="Li T."/>
            <person name="Deng W."/>
            <person name="Zheng M."/>
            <person name="Ji Q."/>
            <person name="Zhao Y."/>
            <person name="Ma Y."/>
            <person name="Wang Q.E."/>
            <person name="Tang T.S."/>
            <person name="Guo C."/>
        </authorList>
    </citation>
    <scope>FUNCTION</scope>
    <scope>PATHWAY</scope>
    <scope>INTERACTION WITH PACMP</scope>
</reference>
<reference key="9">
    <citation type="journal article" date="2014" name="Am. J. Med. Genet. A">
        <title>Intragenic rearrangements in X-linked intellectual deficiency: results of a-CGH in a series of 54 patients and identification of TRPC5 and KLHL15 as potential XLID genes.</title>
        <authorList>
            <person name="Mignon-Ravix C."/>
            <person name="Cacciagli P."/>
            <person name="Choucair N."/>
            <person name="Popovici C."/>
            <person name="Missirian C."/>
            <person name="Milh M."/>
            <person name="Megarbane A."/>
            <person name="Busa T."/>
            <person name="Julia S."/>
            <person name="Girard N."/>
            <person name="Badens C."/>
            <person name="Sigaudy S."/>
            <person name="Philip N."/>
            <person name="Villard L."/>
        </authorList>
    </citation>
    <scope>INVOLVEMENT IN XLID103</scope>
</reference>
<reference key="10">
    <citation type="journal article" date="2016" name="Mol. Psychiatry">
        <title>X-exome sequencing of 405 unresolved families identifies seven novel intellectual disability genes.</title>
        <authorList>
            <person name="Hu H."/>
            <person name="Haas S.A."/>
            <person name="Chelly J."/>
            <person name="Van Esch H."/>
            <person name="Raynaud M."/>
            <person name="de Brouwer A.P."/>
            <person name="Weinert S."/>
            <person name="Froyen G."/>
            <person name="Frints S.G."/>
            <person name="Laumonnier F."/>
            <person name="Zemojtel T."/>
            <person name="Love M.I."/>
            <person name="Richard H."/>
            <person name="Emde A.K."/>
            <person name="Bienek M."/>
            <person name="Jensen C."/>
            <person name="Hambrock M."/>
            <person name="Fischer U."/>
            <person name="Langnick C."/>
            <person name="Feldkamp M."/>
            <person name="Wissink-Lindhout W."/>
            <person name="Lebrun N."/>
            <person name="Castelnau L."/>
            <person name="Rucci J."/>
            <person name="Montjean R."/>
            <person name="Dorseuil O."/>
            <person name="Billuart P."/>
            <person name="Stuhlmann T."/>
            <person name="Shaw M."/>
            <person name="Corbett M.A."/>
            <person name="Gardner A."/>
            <person name="Willis-Owen S."/>
            <person name="Tan C."/>
            <person name="Friend K.L."/>
            <person name="Belet S."/>
            <person name="van Roozendaal K.E."/>
            <person name="Jimenez-Pocquet M."/>
            <person name="Moizard M.P."/>
            <person name="Ronce N."/>
            <person name="Sun R."/>
            <person name="O'Keeffe S."/>
            <person name="Chenna R."/>
            <person name="van Boemmel A."/>
            <person name="Goeke J."/>
            <person name="Hackett A."/>
            <person name="Field M."/>
            <person name="Christie L."/>
            <person name="Boyle J."/>
            <person name="Haan E."/>
            <person name="Nelson J."/>
            <person name="Turner G."/>
            <person name="Baynam G."/>
            <person name="Gillessen-Kaesbach G."/>
            <person name="Mueller U."/>
            <person name="Steinberger D."/>
            <person name="Budny B."/>
            <person name="Badura-Stronka M."/>
            <person name="Latos-Bielenska A."/>
            <person name="Ousager L.B."/>
            <person name="Wieacker P."/>
            <person name="Rodriguez Criado G."/>
            <person name="Bondeson M.L."/>
            <person name="Anneren G."/>
            <person name="Dufke A."/>
            <person name="Cohen M."/>
            <person name="Van Maldergem L."/>
            <person name="Vincent-Delorme C."/>
            <person name="Echenne B."/>
            <person name="Simon-Bouy B."/>
            <person name="Kleefstra T."/>
            <person name="Willemsen M."/>
            <person name="Fryns J.P."/>
            <person name="Devriendt K."/>
            <person name="Ullmann R."/>
            <person name="Vingron M."/>
            <person name="Wrogemann K."/>
            <person name="Wienker T.F."/>
            <person name="Tzschach A."/>
            <person name="van Bokhoven H."/>
            <person name="Gecz J."/>
            <person name="Jentsch T.J."/>
            <person name="Chen W."/>
            <person name="Ropers H.H."/>
            <person name="Kalscheuer V.M."/>
        </authorList>
    </citation>
    <scope>INVOLVEMENT IN XLID103</scope>
</reference>
<organism>
    <name type="scientific">Homo sapiens</name>
    <name type="common">Human</name>
    <dbReference type="NCBI Taxonomy" id="9606"/>
    <lineage>
        <taxon>Eukaryota</taxon>
        <taxon>Metazoa</taxon>
        <taxon>Chordata</taxon>
        <taxon>Craniata</taxon>
        <taxon>Vertebrata</taxon>
        <taxon>Euteleostomi</taxon>
        <taxon>Mammalia</taxon>
        <taxon>Eutheria</taxon>
        <taxon>Euarchontoglires</taxon>
        <taxon>Primates</taxon>
        <taxon>Haplorrhini</taxon>
        <taxon>Catarrhini</taxon>
        <taxon>Hominidae</taxon>
        <taxon>Homo</taxon>
    </lineage>
</organism>